<evidence type="ECO:0000255" key="1">
    <source>
        <dbReference type="HAMAP-Rule" id="MF_01328"/>
    </source>
</evidence>
<evidence type="ECO:0000256" key="2">
    <source>
        <dbReference type="SAM" id="MobiDB-lite"/>
    </source>
</evidence>
<evidence type="ECO:0000305" key="3"/>
<proteinExistence type="inferred from homology"/>
<accession>B9LSS6</accession>
<comment type="function">
    <text evidence="1">One of the primary rRNA binding proteins, this protein initially binds near the 5'-end of the 23S rRNA. It is important during the early stages of 50S assembly. It makes multiple contacts with different domains of the 23S rRNA in the assembled 50S subunit and ribosome.</text>
</comment>
<comment type="function">
    <text evidence="1">Forms part of the polypeptide exit tunnel.</text>
</comment>
<comment type="subunit">
    <text evidence="1">Part of the 50S ribosomal subunit.</text>
</comment>
<comment type="similarity">
    <text evidence="1">Belongs to the universal ribosomal protein uL4 family.</text>
</comment>
<sequence>MNATVHDLDGGDAGSVELPAIFETAFRPDLIGRAVSAAQANRKQAYGADEFAGLRTPAESFGSGRGLAHIPRSENVARRVPNAVSGRAAHPPKAEKDQTKSLNDKERQLAIRSAIAATADAETVAERGHAFDEDLDLPLVVSDEFEDLNKTQEALGVLEAVGADADIERAEEGRSVRAGRGKTRGRKYSQPKSVLVVTSEEPSRAARNLSGVDVATAREVNAEDLAPGAHPGRLTLWTESAIEEVADR</sequence>
<keyword id="KW-1185">Reference proteome</keyword>
<keyword id="KW-0687">Ribonucleoprotein</keyword>
<keyword id="KW-0689">Ribosomal protein</keyword>
<keyword id="KW-0694">RNA-binding</keyword>
<keyword id="KW-0699">rRNA-binding</keyword>
<protein>
    <recommendedName>
        <fullName evidence="1">Large ribosomal subunit protein uL4</fullName>
    </recommendedName>
    <alternativeName>
        <fullName evidence="3">50S ribosomal protein L4</fullName>
    </alternativeName>
</protein>
<gene>
    <name evidence="1" type="primary">rpl4</name>
    <name type="ordered locus">Hlac_2448</name>
</gene>
<dbReference type="EMBL" id="CP001365">
    <property type="protein sequence ID" value="ACM58023.1"/>
    <property type="molecule type" value="Genomic_DNA"/>
</dbReference>
<dbReference type="RefSeq" id="WP_015911135.1">
    <property type="nucleotide sequence ID" value="NC_012029.1"/>
</dbReference>
<dbReference type="SMR" id="B9LSS6"/>
<dbReference type="GeneID" id="7400566"/>
<dbReference type="KEGG" id="hla:Hlac_2448"/>
<dbReference type="eggNOG" id="arCOG04071">
    <property type="taxonomic scope" value="Archaea"/>
</dbReference>
<dbReference type="HOGENOM" id="CLU_026535_0_0_2"/>
<dbReference type="Proteomes" id="UP000000740">
    <property type="component" value="Chromosome 1"/>
</dbReference>
<dbReference type="GO" id="GO:1990904">
    <property type="term" value="C:ribonucleoprotein complex"/>
    <property type="evidence" value="ECO:0007669"/>
    <property type="project" value="UniProtKB-KW"/>
</dbReference>
<dbReference type="GO" id="GO:0005840">
    <property type="term" value="C:ribosome"/>
    <property type="evidence" value="ECO:0007669"/>
    <property type="project" value="UniProtKB-KW"/>
</dbReference>
<dbReference type="GO" id="GO:0019843">
    <property type="term" value="F:rRNA binding"/>
    <property type="evidence" value="ECO:0007669"/>
    <property type="project" value="UniProtKB-UniRule"/>
</dbReference>
<dbReference type="GO" id="GO:0003735">
    <property type="term" value="F:structural constituent of ribosome"/>
    <property type="evidence" value="ECO:0007669"/>
    <property type="project" value="InterPro"/>
</dbReference>
<dbReference type="GO" id="GO:0006412">
    <property type="term" value="P:translation"/>
    <property type="evidence" value="ECO:0007669"/>
    <property type="project" value="UniProtKB-UniRule"/>
</dbReference>
<dbReference type="Gene3D" id="3.40.1370.10">
    <property type="match status" value="1"/>
</dbReference>
<dbReference type="HAMAP" id="MF_01328_A">
    <property type="entry name" value="Ribosomal_uL4_A"/>
    <property type="match status" value="1"/>
</dbReference>
<dbReference type="InterPro" id="IPR002136">
    <property type="entry name" value="Ribosomal_uL4"/>
</dbReference>
<dbReference type="InterPro" id="IPR023574">
    <property type="entry name" value="Ribosomal_uL4_dom_sf"/>
</dbReference>
<dbReference type="InterPro" id="IPR013000">
    <property type="entry name" value="Ribosomal_uL4_euk/arc_CS"/>
</dbReference>
<dbReference type="InterPro" id="IPR045240">
    <property type="entry name" value="Ribosomal_uL4_euk/arch"/>
</dbReference>
<dbReference type="InterPro" id="IPR019970">
    <property type="entry name" value="Ribosomall_uL4-arc"/>
</dbReference>
<dbReference type="NCBIfam" id="TIGR03672">
    <property type="entry name" value="rpl4p_arch"/>
    <property type="match status" value="1"/>
</dbReference>
<dbReference type="PANTHER" id="PTHR19431">
    <property type="entry name" value="60S RIBOSOMAL PROTEIN L4"/>
    <property type="match status" value="1"/>
</dbReference>
<dbReference type="Pfam" id="PF00573">
    <property type="entry name" value="Ribosomal_L4"/>
    <property type="match status" value="1"/>
</dbReference>
<dbReference type="SUPFAM" id="SSF52166">
    <property type="entry name" value="Ribosomal protein L4"/>
    <property type="match status" value="1"/>
</dbReference>
<dbReference type="PROSITE" id="PS00939">
    <property type="entry name" value="RIBOSOMAL_L1E"/>
    <property type="match status" value="1"/>
</dbReference>
<feature type="chain" id="PRO_1000166009" description="Large ribosomal subunit protein uL4">
    <location>
        <begin position="1"/>
        <end position="248"/>
    </location>
</feature>
<feature type="region of interest" description="Disordered" evidence="2">
    <location>
        <begin position="72"/>
        <end position="103"/>
    </location>
</feature>
<feature type="region of interest" description="Disordered" evidence="2">
    <location>
        <begin position="173"/>
        <end position="210"/>
    </location>
</feature>
<feature type="compositionally biased region" description="Basic and acidic residues" evidence="2">
    <location>
        <begin position="92"/>
        <end position="103"/>
    </location>
</feature>
<feature type="compositionally biased region" description="Basic residues" evidence="2">
    <location>
        <begin position="177"/>
        <end position="189"/>
    </location>
</feature>
<organism>
    <name type="scientific">Halorubrum lacusprofundi (strain ATCC 49239 / DSM 5036 / JCM 8891 / ACAM 34)</name>
    <dbReference type="NCBI Taxonomy" id="416348"/>
    <lineage>
        <taxon>Archaea</taxon>
        <taxon>Methanobacteriati</taxon>
        <taxon>Methanobacteriota</taxon>
        <taxon>Stenosarchaea group</taxon>
        <taxon>Halobacteria</taxon>
        <taxon>Halobacteriales</taxon>
        <taxon>Haloferacaceae</taxon>
        <taxon>Halorubrum</taxon>
    </lineage>
</organism>
<name>RL4_HALLT</name>
<reference key="1">
    <citation type="journal article" date="2016" name="Stand. Genomic Sci.">
        <title>Complete genome sequence of the Antarctic Halorubrum lacusprofundi type strain ACAM 34.</title>
        <authorList>
            <person name="Anderson I.J."/>
            <person name="DasSarma P."/>
            <person name="Lucas S."/>
            <person name="Copeland A."/>
            <person name="Lapidus A."/>
            <person name="Del Rio T.G."/>
            <person name="Tice H."/>
            <person name="Dalin E."/>
            <person name="Bruce D.C."/>
            <person name="Goodwin L."/>
            <person name="Pitluck S."/>
            <person name="Sims D."/>
            <person name="Brettin T.S."/>
            <person name="Detter J.C."/>
            <person name="Han C.S."/>
            <person name="Larimer F."/>
            <person name="Hauser L."/>
            <person name="Land M."/>
            <person name="Ivanova N."/>
            <person name="Richardson P."/>
            <person name="Cavicchioli R."/>
            <person name="DasSarma S."/>
            <person name="Woese C.R."/>
            <person name="Kyrpides N.C."/>
        </authorList>
    </citation>
    <scope>NUCLEOTIDE SEQUENCE [LARGE SCALE GENOMIC DNA]</scope>
    <source>
        <strain>ATCC 49239 / DSM 5036 / JCM 8891 / ACAM 34</strain>
    </source>
</reference>